<keyword id="KW-0007">Acetylation</keyword>
<keyword id="KW-0963">Cytoplasm</keyword>
<keyword id="KW-1017">Isopeptide bond</keyword>
<keyword id="KW-1185">Reference proteome</keyword>
<keyword id="KW-0832">Ubl conjugation</keyword>
<proteinExistence type="evidence at protein level"/>
<accession>P40325</accession>
<accession>D6VV46</accession>
<organism>
    <name type="scientific">Saccharomyces cerevisiae (strain ATCC 204508 / S288c)</name>
    <name type="common">Baker's yeast</name>
    <dbReference type="NCBI Taxonomy" id="559292"/>
    <lineage>
        <taxon>Eukaryota</taxon>
        <taxon>Fungi</taxon>
        <taxon>Dikarya</taxon>
        <taxon>Ascomycota</taxon>
        <taxon>Saccharomycotina</taxon>
        <taxon>Saccharomycetes</taxon>
        <taxon>Saccharomycetales</taxon>
        <taxon>Saccharomycetaceae</taxon>
        <taxon>Saccharomyces</taxon>
    </lineage>
</organism>
<sequence>MSKDTHDDELPSYEDVIKEEERLQSQPPRPPRPAANLAQGHQSRPHQRPSTMPATSSSQTYAHSHSYTPTSSQPRPPPRPQQNPSLPWTYPPRFYCSKCGNTGYKLKNGRSCKSCWRRFAPQNNVVSAPTYYTNYTMPVYTNAWQGNRPLYVQPGDPRLGGVLCGECRGSGRTRFLLDEDICPLCHGVGRIITQPQRY</sequence>
<reference key="1">
    <citation type="journal article" date="1998" name="Yeast">
        <title>A 9359 bp fragment from the right arm of Saccharomyces cerevisiae chromosome VII includes the FOL2 and YTA7 genes and three unknown open reading frames.</title>
        <authorList>
            <person name="Agostoni Carbone M.L."/>
            <person name="Lucchini G."/>
            <person name="Melchioretto P."/>
            <person name="Nardese V."/>
            <person name="Vanoni M."/>
            <person name="Panzeri L."/>
        </authorList>
    </citation>
    <scope>NUCLEOTIDE SEQUENCE [GENOMIC DNA]</scope>
    <source>
        <strain>ATCC 96604 / S288c / FY1679</strain>
    </source>
</reference>
<reference key="2">
    <citation type="journal article" date="1997" name="Nature">
        <title>The nucleotide sequence of Saccharomyces cerevisiae chromosome VII.</title>
        <authorList>
            <person name="Tettelin H."/>
            <person name="Agostoni-Carbone M.L."/>
            <person name="Albermann K."/>
            <person name="Albers M."/>
            <person name="Arroyo J."/>
            <person name="Backes U."/>
            <person name="Barreiros T."/>
            <person name="Bertani I."/>
            <person name="Bjourson A.J."/>
            <person name="Brueckner M."/>
            <person name="Bruschi C.V."/>
            <person name="Carignani G."/>
            <person name="Castagnoli L."/>
            <person name="Cerdan E."/>
            <person name="Clemente M.L."/>
            <person name="Coblenz A."/>
            <person name="Coglievina M."/>
            <person name="Coissac E."/>
            <person name="Defoor E."/>
            <person name="Del Bino S."/>
            <person name="Delius H."/>
            <person name="Delneri D."/>
            <person name="de Wergifosse P."/>
            <person name="Dujon B."/>
            <person name="Durand P."/>
            <person name="Entian K.-D."/>
            <person name="Eraso P."/>
            <person name="Escribano V."/>
            <person name="Fabiani L."/>
            <person name="Fartmann B."/>
            <person name="Feroli F."/>
            <person name="Feuermann M."/>
            <person name="Frontali L."/>
            <person name="Garcia-Gonzalez M."/>
            <person name="Garcia-Saez M.I."/>
            <person name="Goffeau A."/>
            <person name="Guerreiro P."/>
            <person name="Hani J."/>
            <person name="Hansen M."/>
            <person name="Hebling U."/>
            <person name="Hernandez K."/>
            <person name="Heumann K."/>
            <person name="Hilger F."/>
            <person name="Hofmann B."/>
            <person name="Indge K.J."/>
            <person name="James C.M."/>
            <person name="Klima R."/>
            <person name="Koetter P."/>
            <person name="Kramer B."/>
            <person name="Kramer W."/>
            <person name="Lauquin G."/>
            <person name="Leuther H."/>
            <person name="Louis E.J."/>
            <person name="Maillier E."/>
            <person name="Marconi A."/>
            <person name="Martegani E."/>
            <person name="Mazon M.J."/>
            <person name="Mazzoni C."/>
            <person name="McReynolds A.D.K."/>
            <person name="Melchioretto P."/>
            <person name="Mewes H.-W."/>
            <person name="Minenkova O."/>
            <person name="Mueller-Auer S."/>
            <person name="Nawrocki A."/>
            <person name="Netter P."/>
            <person name="Neu R."/>
            <person name="Nombela C."/>
            <person name="Oliver S.G."/>
            <person name="Panzeri L."/>
            <person name="Paoluzi S."/>
            <person name="Plevani P."/>
            <person name="Portetelle D."/>
            <person name="Portillo F."/>
            <person name="Potier S."/>
            <person name="Purnelle B."/>
            <person name="Rieger M."/>
            <person name="Riles L."/>
            <person name="Rinaldi T."/>
            <person name="Robben J."/>
            <person name="Rodrigues-Pousada C."/>
            <person name="Rodriguez-Belmonte E."/>
            <person name="Rodriguez-Torres A.M."/>
            <person name="Rose M."/>
            <person name="Ruzzi M."/>
            <person name="Saliola M."/>
            <person name="Sanchez-Perez M."/>
            <person name="Schaefer B."/>
            <person name="Schaefer M."/>
            <person name="Scharfe M."/>
            <person name="Schmidheini T."/>
            <person name="Schreer A."/>
            <person name="Skala J."/>
            <person name="Souciet J.-L."/>
            <person name="Steensma H.Y."/>
            <person name="Talla E."/>
            <person name="Thierry A."/>
            <person name="Vandenbol M."/>
            <person name="van der Aart Q.J.M."/>
            <person name="Van Dyck L."/>
            <person name="Vanoni M."/>
            <person name="Verhasselt P."/>
            <person name="Voet M."/>
            <person name="Volckaert G."/>
            <person name="Wambutt R."/>
            <person name="Watson M.D."/>
            <person name="Weber N."/>
            <person name="Wedler E."/>
            <person name="Wedler H."/>
            <person name="Wipfli P."/>
            <person name="Wolf K."/>
            <person name="Wright L.F."/>
            <person name="Zaccaria P."/>
            <person name="Zimmermann M."/>
            <person name="Zollner A."/>
            <person name="Kleine K."/>
        </authorList>
    </citation>
    <scope>NUCLEOTIDE SEQUENCE [LARGE SCALE GENOMIC DNA]</scope>
    <source>
        <strain>ATCC 204508 / S288c</strain>
    </source>
</reference>
<reference key="3">
    <citation type="journal article" date="2014" name="G3 (Bethesda)">
        <title>The reference genome sequence of Saccharomyces cerevisiae: Then and now.</title>
        <authorList>
            <person name="Engel S.R."/>
            <person name="Dietrich F.S."/>
            <person name="Fisk D.G."/>
            <person name="Binkley G."/>
            <person name="Balakrishnan R."/>
            <person name="Costanzo M.C."/>
            <person name="Dwight S.S."/>
            <person name="Hitz B.C."/>
            <person name="Karra K."/>
            <person name="Nash R.S."/>
            <person name="Weng S."/>
            <person name="Wong E.D."/>
            <person name="Lloyd P."/>
            <person name="Skrzypek M.S."/>
            <person name="Miyasato S.R."/>
            <person name="Simison M."/>
            <person name="Cherry J.M."/>
        </authorList>
    </citation>
    <scope>GENOME REANNOTATION</scope>
    <source>
        <strain>ATCC 204508 / S288c</strain>
    </source>
</reference>
<reference key="4">
    <citation type="journal article" date="2007" name="Genome Res.">
        <title>Approaching a complete repository of sequence-verified protein-encoding clones for Saccharomyces cerevisiae.</title>
        <authorList>
            <person name="Hu Y."/>
            <person name="Rolfs A."/>
            <person name="Bhullar B."/>
            <person name="Murthy T.V.S."/>
            <person name="Zhu C."/>
            <person name="Berger M.F."/>
            <person name="Camargo A.A."/>
            <person name="Kelley F."/>
            <person name="McCarron S."/>
            <person name="Jepson D."/>
            <person name="Richardson A."/>
            <person name="Raphael J."/>
            <person name="Moreira D."/>
            <person name="Taycher E."/>
            <person name="Zuo D."/>
            <person name="Mohr S."/>
            <person name="Kane M.F."/>
            <person name="Williamson J."/>
            <person name="Simpson A.J.G."/>
            <person name="Bulyk M.L."/>
            <person name="Harlow E."/>
            <person name="Marsischky G."/>
            <person name="Kolodner R.D."/>
            <person name="LaBaer J."/>
        </authorList>
    </citation>
    <scope>NUCLEOTIDE SEQUENCE [GENOMIC DNA]</scope>
    <source>
        <strain>ATCC 204508 / S288c</strain>
    </source>
</reference>
<reference key="5">
    <citation type="journal article" date="1994" name="Yeast">
        <title>Identification of a set of yeast genes coding for a novel family of putative ATPases with high similarity to constituents of the 26S protease complex.</title>
        <authorList>
            <person name="Schnall R."/>
            <person name="Mannhaupt G."/>
            <person name="Stucka R."/>
            <person name="Tauer R."/>
            <person name="Ehnle S."/>
            <person name="Schwarzlose C."/>
            <person name="Vetter I."/>
            <person name="Feldmann H."/>
        </authorList>
    </citation>
    <scope>NUCLEOTIDE SEQUENCE [GENOMIC DNA] OF 1-156</scope>
    <source>
        <strain>C836</strain>
    </source>
</reference>
<reference key="6">
    <citation type="journal article" date="2002" name="Genes Dev.">
        <title>Subcellular localization of the yeast proteome.</title>
        <authorList>
            <person name="Kumar A."/>
            <person name="Agarwal S."/>
            <person name="Heyman J.A."/>
            <person name="Matson S."/>
            <person name="Heidtman M."/>
            <person name="Piccirillo S."/>
            <person name="Umansky L."/>
            <person name="Drawid A."/>
            <person name="Jansen R."/>
            <person name="Liu Y."/>
            <person name="Cheung K.-H."/>
            <person name="Miller P."/>
            <person name="Gerstein M."/>
            <person name="Roeder G.S."/>
            <person name="Snyder M."/>
        </authorList>
    </citation>
    <scope>SUBCELLULAR LOCATION [LARGE SCALE ANALYSIS]</scope>
</reference>
<reference key="7">
    <citation type="journal article" date="2003" name="Nat. Biotechnol.">
        <title>A proteomics approach to understanding protein ubiquitination.</title>
        <authorList>
            <person name="Peng J."/>
            <person name="Schwartz D."/>
            <person name="Elias J.E."/>
            <person name="Thoreen C.C."/>
            <person name="Cheng D."/>
            <person name="Marsischky G."/>
            <person name="Roelofs J."/>
            <person name="Finley D."/>
            <person name="Gygi S.P."/>
        </authorList>
    </citation>
    <scope>UBIQUITINATION [LARGE SCALE ANALYSIS] AT LYS-3 AND LYS-18</scope>
    <scope>IDENTIFICATION BY MASS SPECTROMETRY</scope>
    <source>
        <strain>SUB592</strain>
    </source>
</reference>
<reference key="8">
    <citation type="journal article" date="2003" name="Proc. Natl. Acad. Sci. U.S.A.">
        <title>Predicting protein functions from redundancies in large-scale protein interaction networks.</title>
        <authorList>
            <person name="Samanta M.P."/>
            <person name="Liang S."/>
        </authorList>
    </citation>
    <scope>FUNCTION</scope>
</reference>
<reference key="9">
    <citation type="journal article" date="2012" name="Proc. Natl. Acad. Sci. U.S.A.">
        <title>N-terminal acetylome analyses and functional insights of the N-terminal acetyltransferase NatB.</title>
        <authorList>
            <person name="Van Damme P."/>
            <person name="Lasa M."/>
            <person name="Polevoda B."/>
            <person name="Gazquez C."/>
            <person name="Elosegui-Artola A."/>
            <person name="Kim D.S."/>
            <person name="De Juan-Pardo E."/>
            <person name="Demeyer K."/>
            <person name="Hole K."/>
            <person name="Larrea E."/>
            <person name="Timmerman E."/>
            <person name="Prieto J."/>
            <person name="Arnesen T."/>
            <person name="Sherman F."/>
            <person name="Gevaert K."/>
            <person name="Aldabe R."/>
        </authorList>
    </citation>
    <scope>ACETYLATION [LARGE SCALE ANALYSIS] AT SER-2</scope>
    <scope>CLEAVAGE OF INITIATOR METHIONINE [LARGE SCALE ANALYSIS]</scope>
    <scope>IDENTIFICATION BY MASS SPECTROMETRY [LARGE SCALE ANALYSIS]</scope>
</reference>
<comment type="function">
    <text evidence="4">May be involved in assembly and disassembly of the actin cytoskeleton.</text>
</comment>
<comment type="interaction">
    <interactant intactId="EBI-23614">
        <id>P40325</id>
    </interactant>
    <interactant intactId="EBI-22980">
        <id>P43603</id>
        <label>LSB3</label>
    </interactant>
    <organismsDiffer>false</organismsDiffer>
    <experiments>5</experiments>
</comment>
<comment type="interaction">
    <interactant intactId="EBI-23614">
        <id>P40325</id>
    </interactant>
    <interactant intactId="EBI-24460">
        <id>P32793</id>
        <label>YSC84</label>
    </interactant>
    <organismsDiffer>false</organismsDiffer>
    <experiments>3</experiments>
</comment>
<comment type="subcellular location">
    <subcellularLocation>
        <location evidence="2">Cytoplasm</location>
    </subcellularLocation>
</comment>
<comment type="similarity">
    <text evidence="5">Belongs to the HUA1 family.</text>
</comment>
<evidence type="ECO:0000256" key="1">
    <source>
        <dbReference type="SAM" id="MobiDB-lite"/>
    </source>
</evidence>
<evidence type="ECO:0000269" key="2">
    <source>
    </source>
</evidence>
<evidence type="ECO:0000269" key="3">
    <source>
    </source>
</evidence>
<evidence type="ECO:0000269" key="4">
    <source>
    </source>
</evidence>
<evidence type="ECO:0000305" key="5"/>
<evidence type="ECO:0007744" key="6">
    <source>
    </source>
</evidence>
<gene>
    <name type="primary">HUA1</name>
    <name type="ordered locus">YGR268C</name>
</gene>
<feature type="initiator methionine" description="Removed" evidence="6">
    <location>
        <position position="1"/>
    </location>
</feature>
<feature type="chain" id="PRO_0000202865" description="Proline-rich protein HUA1">
    <location>
        <begin position="2"/>
        <end position="198"/>
    </location>
</feature>
<feature type="region of interest" description="Disordered" evidence="1">
    <location>
        <begin position="1"/>
        <end position="86"/>
    </location>
</feature>
<feature type="compositionally biased region" description="Basic and acidic residues" evidence="1">
    <location>
        <begin position="1"/>
        <end position="23"/>
    </location>
</feature>
<feature type="compositionally biased region" description="Polar residues" evidence="1">
    <location>
        <begin position="48"/>
        <end position="67"/>
    </location>
</feature>
<feature type="modified residue" description="N-acetylserine" evidence="6">
    <location>
        <position position="2"/>
    </location>
</feature>
<feature type="cross-link" description="Glycyl lysine isopeptide (Lys-Gly) (interchain with G-Cter in ubiquitin)" evidence="3">
    <location>
        <position position="3"/>
    </location>
</feature>
<feature type="cross-link" description="Glycyl lysine isopeptide (Lys-Gly) (interchain with G-Cter in ubiquitin)" evidence="3">
    <location>
        <position position="18"/>
    </location>
</feature>
<protein>
    <recommendedName>
        <fullName>Proline-rich protein HUA1</fullName>
    </recommendedName>
</protein>
<dbReference type="EMBL" id="Y07893">
    <property type="protein sequence ID" value="CAA69199.1"/>
    <property type="molecule type" value="Genomic_DNA"/>
</dbReference>
<dbReference type="EMBL" id="Z73053">
    <property type="protein sequence ID" value="CAA97298.1"/>
    <property type="molecule type" value="Genomic_DNA"/>
</dbReference>
<dbReference type="EMBL" id="AY558512">
    <property type="protein sequence ID" value="AAS56838.1"/>
    <property type="molecule type" value="Genomic_DNA"/>
</dbReference>
<dbReference type="EMBL" id="X81072">
    <property type="protein sequence ID" value="CAA56961.1"/>
    <property type="molecule type" value="Genomic_DNA"/>
</dbReference>
<dbReference type="EMBL" id="BK006941">
    <property type="protein sequence ID" value="DAA08357.1"/>
    <property type="molecule type" value="Genomic_DNA"/>
</dbReference>
<dbReference type="PIR" id="S64601">
    <property type="entry name" value="S64601"/>
</dbReference>
<dbReference type="RefSeq" id="NP_011784.3">
    <property type="nucleotide sequence ID" value="NM_001181397.3"/>
</dbReference>
<dbReference type="BioGRID" id="33518">
    <property type="interactions" value="84"/>
</dbReference>
<dbReference type="DIP" id="DIP-1987N"/>
<dbReference type="FunCoup" id="P40325">
    <property type="interactions" value="82"/>
</dbReference>
<dbReference type="IntAct" id="P40325">
    <property type="interactions" value="12"/>
</dbReference>
<dbReference type="MINT" id="P40325"/>
<dbReference type="STRING" id="4932.YGR268C"/>
<dbReference type="iPTMnet" id="P40325"/>
<dbReference type="PaxDb" id="4932-YGR268C"/>
<dbReference type="PeptideAtlas" id="P40325"/>
<dbReference type="EnsemblFungi" id="YGR268C_mRNA">
    <property type="protein sequence ID" value="YGR268C"/>
    <property type="gene ID" value="YGR268C"/>
</dbReference>
<dbReference type="GeneID" id="853185"/>
<dbReference type="KEGG" id="sce:YGR268C"/>
<dbReference type="AGR" id="SGD:S000003500"/>
<dbReference type="SGD" id="S000003500">
    <property type="gene designation" value="HUA1"/>
</dbReference>
<dbReference type="VEuPathDB" id="FungiDB:YGR268C"/>
<dbReference type="eggNOG" id="ENOG502S12N">
    <property type="taxonomic scope" value="Eukaryota"/>
</dbReference>
<dbReference type="HOGENOM" id="CLU_078573_1_0_1"/>
<dbReference type="InParanoid" id="P40325"/>
<dbReference type="OMA" id="GMVHFLF"/>
<dbReference type="OrthoDB" id="2405700at2759"/>
<dbReference type="BioCyc" id="YEAST:G3O-30935-MONOMER"/>
<dbReference type="BioGRID-ORCS" id="853185">
    <property type="hits" value="10 hits in 10 CRISPR screens"/>
</dbReference>
<dbReference type="PRO" id="PR:P40325"/>
<dbReference type="Proteomes" id="UP000002311">
    <property type="component" value="Chromosome VII"/>
</dbReference>
<dbReference type="RNAct" id="P40325">
    <property type="molecule type" value="protein"/>
</dbReference>
<dbReference type="GO" id="GO:0005737">
    <property type="term" value="C:cytoplasm"/>
    <property type="evidence" value="ECO:0000314"/>
    <property type="project" value="SGD"/>
</dbReference>
<dbReference type="Gene3D" id="6.20.20.10">
    <property type="match status" value="1"/>
</dbReference>
<dbReference type="InterPro" id="IPR038910">
    <property type="entry name" value="Hua1-like"/>
</dbReference>
<dbReference type="PANTHER" id="PTHR28031">
    <property type="entry name" value="PROLINE-RICH PROTEIN HUA1"/>
    <property type="match status" value="1"/>
</dbReference>
<dbReference type="PANTHER" id="PTHR28031:SF1">
    <property type="entry name" value="PROLINE-RICH PROTEIN HUA1"/>
    <property type="match status" value="1"/>
</dbReference>
<name>HUA1_YEAST</name>